<reference key="1">
    <citation type="journal article" date="1992" name="J. Mol. Biol.">
        <title>NAM7 nuclear gene encodes a novel member of a family of helicases with a Zn-ligand motif and is involved in mitochondrial functions in Saccharomyces cerevisiae.</title>
        <authorList>
            <person name="Altamura N."/>
            <person name="Groudinsky O."/>
            <person name="Dujardin G."/>
            <person name="Slonimski P.P."/>
        </authorList>
    </citation>
    <scope>NUCLEOTIDE SEQUENCE [GENOMIC DNA]</scope>
    <source>
        <strain>R23/50</strain>
    </source>
</reference>
<reference key="2">
    <citation type="journal article" date="1992" name="Mol. Cell. Biol.">
        <title>Gene products that promote mRNA turnover in Saccharomyces cerevisiae.</title>
        <authorList>
            <person name="Leeds P.F."/>
            <person name="Wood J.M."/>
            <person name="Lee B.S."/>
            <person name="Culbertson M.R."/>
        </authorList>
    </citation>
    <scope>NUCLEOTIDE SEQUENCE [GENOMIC DNA]</scope>
</reference>
<reference key="3">
    <citation type="journal article" date="1997" name="Nature">
        <title>The nucleotide sequence of Saccharomyces cerevisiae chromosome XIII.</title>
        <authorList>
            <person name="Bowman S."/>
            <person name="Churcher C.M."/>
            <person name="Badcock K."/>
            <person name="Brown D."/>
            <person name="Chillingworth T."/>
            <person name="Connor R."/>
            <person name="Dedman K."/>
            <person name="Devlin K."/>
            <person name="Gentles S."/>
            <person name="Hamlin N."/>
            <person name="Hunt S."/>
            <person name="Jagels K."/>
            <person name="Lye G."/>
            <person name="Moule S."/>
            <person name="Odell C."/>
            <person name="Pearson D."/>
            <person name="Rajandream M.A."/>
            <person name="Rice P."/>
            <person name="Skelton J."/>
            <person name="Walsh S.V."/>
            <person name="Whitehead S."/>
            <person name="Barrell B.G."/>
        </authorList>
    </citation>
    <scope>NUCLEOTIDE SEQUENCE [LARGE SCALE GENOMIC DNA]</scope>
    <source>
        <strain>ATCC 204508 / S288c</strain>
    </source>
</reference>
<reference key="4">
    <citation type="journal article" date="2014" name="G3 (Bethesda)">
        <title>The reference genome sequence of Saccharomyces cerevisiae: Then and now.</title>
        <authorList>
            <person name="Engel S.R."/>
            <person name="Dietrich F.S."/>
            <person name="Fisk D.G."/>
            <person name="Binkley G."/>
            <person name="Balakrishnan R."/>
            <person name="Costanzo M.C."/>
            <person name="Dwight S.S."/>
            <person name="Hitz B.C."/>
            <person name="Karra K."/>
            <person name="Nash R.S."/>
            <person name="Weng S."/>
            <person name="Wong E.D."/>
            <person name="Lloyd P."/>
            <person name="Skrzypek M.S."/>
            <person name="Miyasato S.R."/>
            <person name="Simison M."/>
            <person name="Cherry J.M."/>
        </authorList>
    </citation>
    <scope>GENOME REANNOTATION</scope>
    <source>
        <strain>ATCC 204508 / S288c</strain>
    </source>
</reference>
<reference key="5">
    <citation type="journal article" date="1995" name="Mol. Biol. Cell">
        <title>The majority of yeast UPF1 co-localizes with polyribosomes in the cytoplasm.</title>
        <authorList>
            <person name="Atkin A.L."/>
            <person name="Altamura N."/>
            <person name="Leeds P."/>
            <person name="Culbertson M.R."/>
        </authorList>
    </citation>
    <scope>SUBCELLULAR LOCATION</scope>
</reference>
<reference key="6">
    <citation type="journal article" date="1996" name="EMBO J.">
        <title>Mof4-1 is an allele of the UPF1/IFS2 gene which affects both mRNA turnover and -1 ribosomal frameshifting efficiency.</title>
        <authorList>
            <person name="Cui Y."/>
            <person name="Dinman J.D."/>
            <person name="Peltz S.W."/>
        </authorList>
    </citation>
    <scope>FUNCTION</scope>
</reference>
<reference key="7">
    <citation type="journal article" date="2003" name="Nature">
        <title>Global analysis of protein expression in yeast.</title>
        <authorList>
            <person name="Ghaemmaghami S."/>
            <person name="Huh W.-K."/>
            <person name="Bower K."/>
            <person name="Howson R.W."/>
            <person name="Belle A."/>
            <person name="Dephoure N."/>
            <person name="O'Shea E.K."/>
            <person name="Weissman J.S."/>
        </authorList>
    </citation>
    <scope>LEVEL OF PROTEIN EXPRESSION [LARGE SCALE ANALYSIS]</scope>
</reference>
<reference key="8">
    <citation type="journal article" date="2007" name="J. Proteome Res.">
        <title>Large-scale phosphorylation analysis of alpha-factor-arrested Saccharomyces cerevisiae.</title>
        <authorList>
            <person name="Li X."/>
            <person name="Gerber S.A."/>
            <person name="Rudner A.D."/>
            <person name="Beausoleil S.A."/>
            <person name="Haas W."/>
            <person name="Villen J."/>
            <person name="Elias J.E."/>
            <person name="Gygi S.P."/>
        </authorList>
    </citation>
    <scope>PHOSPHORYLATION [LARGE SCALE ANALYSIS] AT SER-869</scope>
    <scope>IDENTIFICATION BY MASS SPECTROMETRY [LARGE SCALE ANALYSIS]</scope>
    <source>
        <strain>ADR376</strain>
    </source>
</reference>
<reference key="9">
    <citation type="journal article" date="2008" name="Mol. Cell. Proteomics">
        <title>A multidimensional chromatography technology for in-depth phosphoproteome analysis.</title>
        <authorList>
            <person name="Albuquerque C.P."/>
            <person name="Smolka M.B."/>
            <person name="Payne S.H."/>
            <person name="Bafna V."/>
            <person name="Eng J."/>
            <person name="Zhou H."/>
        </authorList>
    </citation>
    <scope>PHOSPHORYLATION [LARGE SCALE ANALYSIS] AT SER-869</scope>
    <scope>IDENTIFICATION BY MASS SPECTROMETRY [LARGE SCALE ANALYSIS]</scope>
</reference>
<reference key="10">
    <citation type="journal article" date="2009" name="Science">
        <title>Global analysis of Cdk1 substrate phosphorylation sites provides insights into evolution.</title>
        <authorList>
            <person name="Holt L.J."/>
            <person name="Tuch B.B."/>
            <person name="Villen J."/>
            <person name="Johnson A.D."/>
            <person name="Gygi S.P."/>
            <person name="Morgan D.O."/>
        </authorList>
    </citation>
    <scope>PHOSPHORYLATION [LARGE SCALE ANALYSIS] AT SER-56</scope>
    <scope>IDENTIFICATION BY MASS SPECTROMETRY [LARGE SCALE ANALYSIS]</scope>
</reference>
<reference key="11">
    <citation type="journal article" date="2018" name="Nat. Commun.">
        <title>UPF1-like helicase grip on nucleic acids dictates processivity.</title>
        <authorList>
            <person name="Kanaan J."/>
            <person name="Raj S."/>
            <person name="Decourty L."/>
            <person name="Saveanu C."/>
            <person name="Croquette V."/>
            <person name="Le Hir H."/>
        </authorList>
    </citation>
    <scope>FUNCTION</scope>
    <scope>CATALYTIC ACTIVITY</scope>
    <scope>MUTAGENESIS OF ALA-484; LYS-485 AND ARG-487</scope>
</reference>
<organism>
    <name type="scientific">Saccharomyces cerevisiae (strain ATCC 204508 / S288c)</name>
    <name type="common">Baker's yeast</name>
    <dbReference type="NCBI Taxonomy" id="559292"/>
    <lineage>
        <taxon>Eukaryota</taxon>
        <taxon>Fungi</taxon>
        <taxon>Dikarya</taxon>
        <taxon>Ascomycota</taxon>
        <taxon>Saccharomycotina</taxon>
        <taxon>Saccharomycetes</taxon>
        <taxon>Saccharomycetales</taxon>
        <taxon>Saccharomycetaceae</taxon>
        <taxon>Saccharomyces</taxon>
    </lineage>
</organism>
<protein>
    <recommendedName>
        <fullName>ATP-dependent helicase NAM7</fullName>
        <ecNumber evidence="5">3.6.4.12</ecNumber>
        <ecNumber evidence="1">3.6.4.13</ecNumber>
    </recommendedName>
    <alternativeName>
        <fullName>Nonsense-mediated mRNA decay protein 1</fullName>
    </alternativeName>
    <alternativeName>
        <fullName>Nuclear accommodation of mitochondria 7 protein</fullName>
    </alternativeName>
    <alternativeName>
        <fullName>Up-frameshift suppressor 1</fullName>
    </alternativeName>
</protein>
<gene>
    <name type="primary">NAM7</name>
    <name type="synonym">IFS2</name>
    <name evidence="8" type="synonym">MOF4</name>
    <name evidence="8" type="synonym">UPF1</name>
    <name type="ordered locus">YMR080C</name>
    <name type="ORF">YM9582.05C</name>
</gene>
<proteinExistence type="evidence at protein level"/>
<accession>P30771</accession>
<accession>D6VZQ4</accession>
<keyword id="KW-0002">3D-structure</keyword>
<keyword id="KW-0067">ATP-binding</keyword>
<keyword id="KW-0963">Cytoplasm</keyword>
<keyword id="KW-0347">Helicase</keyword>
<keyword id="KW-0378">Hydrolase</keyword>
<keyword id="KW-0479">Metal-binding</keyword>
<keyword id="KW-0866">Nonsense-mediated mRNA decay</keyword>
<keyword id="KW-0547">Nucleotide-binding</keyword>
<keyword id="KW-0597">Phosphoprotein</keyword>
<keyword id="KW-1185">Reference proteome</keyword>
<keyword id="KW-0862">Zinc</keyword>
<keyword id="KW-0863">Zinc-finger</keyword>
<sequence length="971" mass="109430">MVGSGSHTPYDISNSPSDVNVQPATQLNSTLVEDDDVDNQLFEEAQVTETGFRSPSASDNSCAYCGIDSAKCVIKCNSCKKWFCNTKNGTSSSHIVNHLVLSHHNVVSLHPDSDLGDTVLECYNCGRKNVFLLGFVSAKSEAVVVLLCRIPCAQTKNANWDTDQWQPLIEDRQLLSWVAEQPTEEEKLKARLITPSQISKLEAKWRSNKDATINDIDAPEEQEAIPPLLLRYQDAYEYQRSYGPLIKLEADYDKQLKESQALEHISVSWSLALNNRHLASFTLSTFESNELKVAIGDEMILWYSGMQHPDWEGRGYIVRLPNSFQDTFTLELKPSKTPPPTHLTTGFTAEFIWKGTSYDRMQDALKKFAIDKKSISGYLYYKILGHQVVDISFDVPLPKEFSIPNFAQLNSSQSNAVSHVLQRPLSLIQGPPGTGKTVTSATIVYHLSKIHKDRILVCAPSNVAVDHLAAKLRDLGLKVVRLTAKSREDVESSVSNLALHNLVGRGAKGELKNLLKLKDEVGELSASDTKRFVKLVRKTEAEILNKADVVCCTCVGAGDKRLDTKFRTVLIDESTQASEPECLIPIVKGAKQVILVGDHQQLGPVILERKAADAGLKQSLFERLISLGHVPIRLEVQYRMNPYLSEFPSNMFYEGSLQNGVTIEQRTVPNSKFPWPIRGIPMMFWANYGREEISANGTSFLNRIEAMNCERIITKLFRDGVKPEQIGVITPYEGQRAYILQYMQMNGSLDKDLYIKVEVASVDAFQGREKDYIILSCVRANEQQAIGFLRDPRRLNVGLTRAKYGLVILGNPRSLARNTLWNHLLIHFREKGCLVEGTLDNLQLCTVQLVRPQPRKTERPMNAQFNVESEMGDFPKFQDFDAQSMVSFSGQIGDFGNAFVDNTELSSYINNEYWNFENFKSAFSQKQNRNEIDDRNLYQEEASHLNSNFARELQREEQKHELSKDFSNLGI</sequence>
<comment type="function">
    <text evidence="5 7">RNA-dependent helicase required for nonsense-mediated decay (NMD) of aberrant mRNAs containing premature stop codons and modulates the expression level of normal mRNAs (PubMed:30218034, PubMed:8896465). Also capable of unwinding double-stranded DNA and translocating on single-stranded DNA (PubMed:30218034).</text>
</comment>
<comment type="catalytic activity">
    <reaction evidence="5">
        <text>ATP + H2O = ADP + phosphate + H(+)</text>
        <dbReference type="Rhea" id="RHEA:13065"/>
        <dbReference type="ChEBI" id="CHEBI:15377"/>
        <dbReference type="ChEBI" id="CHEBI:15378"/>
        <dbReference type="ChEBI" id="CHEBI:30616"/>
        <dbReference type="ChEBI" id="CHEBI:43474"/>
        <dbReference type="ChEBI" id="CHEBI:456216"/>
        <dbReference type="EC" id="3.6.4.12"/>
    </reaction>
    <physiologicalReaction direction="left-to-right" evidence="5">
        <dbReference type="Rhea" id="RHEA:13066"/>
    </physiologicalReaction>
</comment>
<comment type="catalytic activity">
    <reaction evidence="1">
        <text>ATP + H2O = ADP + phosphate + H(+)</text>
        <dbReference type="Rhea" id="RHEA:13065"/>
        <dbReference type="ChEBI" id="CHEBI:15377"/>
        <dbReference type="ChEBI" id="CHEBI:15378"/>
        <dbReference type="ChEBI" id="CHEBI:30616"/>
        <dbReference type="ChEBI" id="CHEBI:43474"/>
        <dbReference type="ChEBI" id="CHEBI:456216"/>
        <dbReference type="EC" id="3.6.4.13"/>
    </reaction>
    <physiologicalReaction direction="left-to-right" evidence="1">
        <dbReference type="Rhea" id="RHEA:13066"/>
    </physiologicalReaction>
</comment>
<comment type="subcellular location">
    <subcellularLocation>
        <location evidence="6">Cytoplasm</location>
    </subcellularLocation>
    <text evidence="6">Associates with polysomes.</text>
</comment>
<comment type="miscellaneous">
    <text evidence="4">Present with 6090 molecules/cell in log phase SD medium.</text>
</comment>
<comment type="similarity">
    <text evidence="9">Belongs to the DNA2/NAM7 helicase family.</text>
</comment>
<dbReference type="EC" id="3.6.4.12" evidence="5"/>
<dbReference type="EC" id="3.6.4.13" evidence="1"/>
<dbReference type="EMBL" id="X62394">
    <property type="protein sequence ID" value="CAA44266.1"/>
    <property type="molecule type" value="Genomic_DNA"/>
</dbReference>
<dbReference type="EMBL" id="M76659">
    <property type="protein sequence ID" value="AAA35197.1"/>
    <property type="molecule type" value="Genomic_DNA"/>
</dbReference>
<dbReference type="EMBL" id="Z49259">
    <property type="protein sequence ID" value="CAA89226.1"/>
    <property type="molecule type" value="Genomic_DNA"/>
</dbReference>
<dbReference type="EMBL" id="BK006946">
    <property type="protein sequence ID" value="DAA09978.1"/>
    <property type="molecule type" value="Genomic_DNA"/>
</dbReference>
<dbReference type="PIR" id="S23408">
    <property type="entry name" value="S23408"/>
</dbReference>
<dbReference type="RefSeq" id="NP_013797.1">
    <property type="nucleotide sequence ID" value="NM_001182579.1"/>
</dbReference>
<dbReference type="PDB" id="2XZL">
    <property type="method" value="X-ray"/>
    <property type="resolution" value="2.40 A"/>
    <property type="chains" value="A=54-850"/>
</dbReference>
<dbReference type="PDB" id="8RD3">
    <property type="method" value="X-ray"/>
    <property type="resolution" value="2.40 A"/>
    <property type="chains" value="A=221-851"/>
</dbReference>
<dbReference type="PDBsum" id="2XZL"/>
<dbReference type="PDBsum" id="8RD3"/>
<dbReference type="SMR" id="P30771"/>
<dbReference type="BioGRID" id="35256">
    <property type="interactions" value="887"/>
</dbReference>
<dbReference type="ComplexPortal" id="CPX-1315">
    <property type="entry name" value="Nonsense-mediated decay complex"/>
</dbReference>
<dbReference type="DIP" id="DIP-2373N"/>
<dbReference type="FunCoup" id="P30771">
    <property type="interactions" value="1496"/>
</dbReference>
<dbReference type="IntAct" id="P30771">
    <property type="interactions" value="35"/>
</dbReference>
<dbReference type="MINT" id="P30771"/>
<dbReference type="STRING" id="4932.YMR080C"/>
<dbReference type="iPTMnet" id="P30771"/>
<dbReference type="PaxDb" id="4932-YMR080C"/>
<dbReference type="PeptideAtlas" id="P30771"/>
<dbReference type="EnsemblFungi" id="YMR080C_mRNA">
    <property type="protein sequence ID" value="YMR080C"/>
    <property type="gene ID" value="YMR080C"/>
</dbReference>
<dbReference type="GeneID" id="855104"/>
<dbReference type="KEGG" id="sce:YMR080C"/>
<dbReference type="AGR" id="SGD:S000004685"/>
<dbReference type="SGD" id="S000004685">
    <property type="gene designation" value="NAM7"/>
</dbReference>
<dbReference type="VEuPathDB" id="FungiDB:YMR080C"/>
<dbReference type="eggNOG" id="KOG1802">
    <property type="taxonomic scope" value="Eukaryota"/>
</dbReference>
<dbReference type="GeneTree" id="ENSGT00940000157413"/>
<dbReference type="HOGENOM" id="CLU_001666_4_1_1"/>
<dbReference type="InParanoid" id="P30771"/>
<dbReference type="OMA" id="QYMQMNG"/>
<dbReference type="OrthoDB" id="6513042at2759"/>
<dbReference type="BioCyc" id="YEAST:G3O-32782-MONOMER"/>
<dbReference type="Reactome" id="R-SCE-975956">
    <property type="pathway name" value="Nonsense Mediated Decay (NMD) independent of the Exon Junction Complex (EJC)"/>
</dbReference>
<dbReference type="Reactome" id="R-SCE-975957">
    <property type="pathway name" value="Nonsense Mediated Decay (NMD) enhanced by the Exon Junction Complex (EJC)"/>
</dbReference>
<dbReference type="BioGRID-ORCS" id="855104">
    <property type="hits" value="0 hits in 10 CRISPR screens"/>
</dbReference>
<dbReference type="CD-CODE" id="A777E0F8">
    <property type="entry name" value="P-body"/>
</dbReference>
<dbReference type="CD-CODE" id="E03F929F">
    <property type="entry name" value="Stress granule"/>
</dbReference>
<dbReference type="EvolutionaryTrace" id="P30771"/>
<dbReference type="PRO" id="PR:P30771"/>
<dbReference type="Proteomes" id="UP000002311">
    <property type="component" value="Chromosome XIII"/>
</dbReference>
<dbReference type="RNAct" id="P30771">
    <property type="molecule type" value="protein"/>
</dbReference>
<dbReference type="GO" id="GO:0005737">
    <property type="term" value="C:cytoplasm"/>
    <property type="evidence" value="ECO:0007005"/>
    <property type="project" value="SGD"/>
</dbReference>
<dbReference type="GO" id="GO:0005524">
    <property type="term" value="F:ATP binding"/>
    <property type="evidence" value="ECO:0007669"/>
    <property type="project" value="UniProtKB-KW"/>
</dbReference>
<dbReference type="GO" id="GO:0016887">
    <property type="term" value="F:ATP hydrolysis activity"/>
    <property type="evidence" value="ECO:0000314"/>
    <property type="project" value="UniProtKB"/>
</dbReference>
<dbReference type="GO" id="GO:0036121">
    <property type="term" value="F:double-stranded DNA helicase activity"/>
    <property type="evidence" value="ECO:0000314"/>
    <property type="project" value="UniProtKB"/>
</dbReference>
<dbReference type="GO" id="GO:0003729">
    <property type="term" value="F:mRNA binding"/>
    <property type="evidence" value="ECO:0007005"/>
    <property type="project" value="SGD"/>
</dbReference>
<dbReference type="GO" id="GO:0043024">
    <property type="term" value="F:ribosomal small subunit binding"/>
    <property type="evidence" value="ECO:0000314"/>
    <property type="project" value="SGD"/>
</dbReference>
<dbReference type="GO" id="GO:0003723">
    <property type="term" value="F:RNA binding"/>
    <property type="evidence" value="ECO:0000318"/>
    <property type="project" value="GO_Central"/>
</dbReference>
<dbReference type="GO" id="GO:0003724">
    <property type="term" value="F:RNA helicase activity"/>
    <property type="evidence" value="ECO:0000314"/>
    <property type="project" value="SGD"/>
</dbReference>
<dbReference type="GO" id="GO:0003697">
    <property type="term" value="F:single-stranded DNA binding"/>
    <property type="evidence" value="ECO:0000314"/>
    <property type="project" value="UniProtKB"/>
</dbReference>
<dbReference type="GO" id="GO:0008270">
    <property type="term" value="F:zinc ion binding"/>
    <property type="evidence" value="ECO:0007669"/>
    <property type="project" value="UniProtKB-KW"/>
</dbReference>
<dbReference type="GO" id="GO:0071026">
    <property type="term" value="P:cytoplasmic RNA surveillance"/>
    <property type="evidence" value="ECO:0000303"/>
    <property type="project" value="ComplexPortal"/>
</dbReference>
<dbReference type="GO" id="GO:0006310">
    <property type="term" value="P:DNA recombination"/>
    <property type="evidence" value="ECO:0000315"/>
    <property type="project" value="SGD"/>
</dbReference>
<dbReference type="GO" id="GO:0008298">
    <property type="term" value="P:intracellular mRNA localization"/>
    <property type="evidence" value="ECO:0000315"/>
    <property type="project" value="SGD"/>
</dbReference>
<dbReference type="GO" id="GO:0000956">
    <property type="term" value="P:nuclear-transcribed mRNA catabolic process"/>
    <property type="evidence" value="ECO:0000315"/>
    <property type="project" value="SGD"/>
</dbReference>
<dbReference type="GO" id="GO:0070478">
    <property type="term" value="P:nuclear-transcribed mRNA catabolic process, 3'-5' exonucleolytic nonsense-mediated decay"/>
    <property type="evidence" value="ECO:0000315"/>
    <property type="project" value="SGD"/>
</dbReference>
<dbReference type="GO" id="GO:0000184">
    <property type="term" value="P:nuclear-transcribed mRNA catabolic process, nonsense-mediated decay"/>
    <property type="evidence" value="ECO:0000314"/>
    <property type="project" value="UniProtKB"/>
</dbReference>
<dbReference type="GO" id="GO:0016567">
    <property type="term" value="P:protein ubiquitination"/>
    <property type="evidence" value="ECO:0000314"/>
    <property type="project" value="SGD"/>
</dbReference>
<dbReference type="GO" id="GO:0006449">
    <property type="term" value="P:regulation of translational termination"/>
    <property type="evidence" value="ECO:0000315"/>
    <property type="project" value="SGD"/>
</dbReference>
<dbReference type="GO" id="GO:0030466">
    <property type="term" value="P:silent mating-type cassette heterochromatin formation"/>
    <property type="evidence" value="ECO:0000316"/>
    <property type="project" value="SGD"/>
</dbReference>
<dbReference type="CDD" id="cd21407">
    <property type="entry name" value="1B_UPF1-like"/>
    <property type="match status" value="1"/>
</dbReference>
<dbReference type="CDD" id="cd18039">
    <property type="entry name" value="DEXXQc_UPF1"/>
    <property type="match status" value="1"/>
</dbReference>
<dbReference type="CDD" id="cd18808">
    <property type="entry name" value="SF1_C_Upf1"/>
    <property type="match status" value="1"/>
</dbReference>
<dbReference type="CDD" id="cd21400">
    <property type="entry name" value="ZBD_UPF1-like"/>
    <property type="match status" value="1"/>
</dbReference>
<dbReference type="FunFam" id="2.40.30.230:FF:000004">
    <property type="entry name" value="ATP-dependent helicase NAM7"/>
    <property type="match status" value="1"/>
</dbReference>
<dbReference type="FunFam" id="3.40.50.300:FF:000097">
    <property type="entry name" value="Regulator of nonsense transcripts 1"/>
    <property type="match status" value="1"/>
</dbReference>
<dbReference type="Gene3D" id="2.40.30.230">
    <property type="match status" value="1"/>
</dbReference>
<dbReference type="Gene3D" id="6.10.140.1240">
    <property type="match status" value="1"/>
</dbReference>
<dbReference type="Gene3D" id="3.40.50.300">
    <property type="entry name" value="P-loop containing nucleotide triphosphate hydrolases"/>
    <property type="match status" value="2"/>
</dbReference>
<dbReference type="InterPro" id="IPR003593">
    <property type="entry name" value="AAA+_ATPase"/>
</dbReference>
<dbReference type="InterPro" id="IPR045055">
    <property type="entry name" value="DNA2/NAM7-like"/>
</dbReference>
<dbReference type="InterPro" id="IPR041679">
    <property type="entry name" value="DNA2/NAM7-like_C"/>
</dbReference>
<dbReference type="InterPro" id="IPR041677">
    <property type="entry name" value="DNA2/NAM7_AAA_11"/>
</dbReference>
<dbReference type="InterPro" id="IPR027417">
    <property type="entry name" value="P-loop_NTPase"/>
</dbReference>
<dbReference type="InterPro" id="IPR047187">
    <property type="entry name" value="SF1_C_Upf1"/>
</dbReference>
<dbReference type="InterPro" id="IPR040812">
    <property type="entry name" value="UPF1_1B_dom"/>
</dbReference>
<dbReference type="InterPro" id="IPR018999">
    <property type="entry name" value="UPF1_CH/ZBD"/>
</dbReference>
<dbReference type="PANTHER" id="PTHR10887">
    <property type="entry name" value="DNA2/NAM7 HELICASE FAMILY"/>
    <property type="match status" value="1"/>
</dbReference>
<dbReference type="PANTHER" id="PTHR10887:SF364">
    <property type="entry name" value="REGULATOR OF NONSENSE TRANSCRIPTS 1"/>
    <property type="match status" value="1"/>
</dbReference>
<dbReference type="Pfam" id="PF13086">
    <property type="entry name" value="AAA_11"/>
    <property type="match status" value="2"/>
</dbReference>
<dbReference type="Pfam" id="PF13087">
    <property type="entry name" value="AAA_12"/>
    <property type="match status" value="1"/>
</dbReference>
<dbReference type="Pfam" id="PF18141">
    <property type="entry name" value="UPF1_1B_dom"/>
    <property type="match status" value="1"/>
</dbReference>
<dbReference type="Pfam" id="PF09416">
    <property type="entry name" value="UPF1_Zn_bind"/>
    <property type="match status" value="1"/>
</dbReference>
<dbReference type="SMART" id="SM00382">
    <property type="entry name" value="AAA"/>
    <property type="match status" value="1"/>
</dbReference>
<dbReference type="SUPFAM" id="SSF52540">
    <property type="entry name" value="P-loop containing nucleoside triphosphate hydrolases"/>
    <property type="match status" value="1"/>
</dbReference>
<dbReference type="PROSITE" id="PS51997">
    <property type="entry name" value="UPF1_CH_RICH"/>
    <property type="match status" value="1"/>
</dbReference>
<name>RENT1_YEAST</name>
<evidence type="ECO:0000250" key="1">
    <source>
        <dbReference type="UniProtKB" id="Q92900"/>
    </source>
</evidence>
<evidence type="ECO:0000255" key="2">
    <source>
        <dbReference type="PROSITE-ProRule" id="PRU01341"/>
    </source>
</evidence>
<evidence type="ECO:0000256" key="3">
    <source>
        <dbReference type="SAM" id="MobiDB-lite"/>
    </source>
</evidence>
<evidence type="ECO:0000269" key="4">
    <source>
    </source>
</evidence>
<evidence type="ECO:0000269" key="5">
    <source>
    </source>
</evidence>
<evidence type="ECO:0000269" key="6">
    <source>
    </source>
</evidence>
<evidence type="ECO:0000269" key="7">
    <source>
    </source>
</evidence>
<evidence type="ECO:0000303" key="8">
    <source>
    </source>
</evidence>
<evidence type="ECO:0000305" key="9"/>
<evidence type="ECO:0007744" key="10">
    <source>
    </source>
</evidence>
<evidence type="ECO:0007744" key="11">
    <source>
    </source>
</evidence>
<evidence type="ECO:0007744" key="12">
    <source>
    </source>
</evidence>
<evidence type="ECO:0007829" key="13">
    <source>
        <dbReference type="PDB" id="2XZL"/>
    </source>
</evidence>
<evidence type="ECO:0007829" key="14">
    <source>
        <dbReference type="PDB" id="8RD3"/>
    </source>
</evidence>
<feature type="chain" id="PRO_0000080713" description="ATP-dependent helicase NAM7">
    <location>
        <begin position="1"/>
        <end position="971"/>
    </location>
</feature>
<feature type="domain" description="Upf1 CH-rich" evidence="2">
    <location>
        <begin position="54"/>
        <end position="208"/>
    </location>
</feature>
<feature type="region of interest" description="Disordered" evidence="3">
    <location>
        <begin position="1"/>
        <end position="22"/>
    </location>
</feature>
<feature type="region of interest" description="C3H" evidence="2">
    <location>
        <begin position="62"/>
        <end position="94"/>
    </location>
</feature>
<feature type="region of interest" description="CC/SHH/C" evidence="2">
    <location>
        <begin position="76"/>
        <end position="104"/>
    </location>
</feature>
<feature type="region of interest" description="C4" evidence="2">
    <location>
        <begin position="122"/>
        <end position="152"/>
    </location>
</feature>
<feature type="binding site" evidence="2">
    <location>
        <position position="62"/>
    </location>
    <ligand>
        <name>Zn(2+)</name>
        <dbReference type="ChEBI" id="CHEBI:29105"/>
        <label>1</label>
    </ligand>
</feature>
<feature type="binding site" evidence="2">
    <location>
        <position position="65"/>
    </location>
    <ligand>
        <name>Zn(2+)</name>
        <dbReference type="ChEBI" id="CHEBI:29105"/>
        <label>1</label>
    </ligand>
</feature>
<feature type="binding site" evidence="2">
    <location>
        <position position="76"/>
    </location>
    <ligand>
        <name>Zn(2+)</name>
        <dbReference type="ChEBI" id="CHEBI:29105"/>
        <label>2</label>
    </ligand>
</feature>
<feature type="binding site" evidence="2">
    <location>
        <position position="79"/>
    </location>
    <ligand>
        <name>Zn(2+)</name>
        <dbReference type="ChEBI" id="CHEBI:29105"/>
        <label>2</label>
    </ligand>
</feature>
<feature type="binding site" evidence="2">
    <location>
        <position position="84"/>
    </location>
    <ligand>
        <name>Zn(2+)</name>
        <dbReference type="ChEBI" id="CHEBI:29105"/>
        <label>1</label>
    </ligand>
</feature>
<feature type="binding site" evidence="2">
    <location>
        <position position="94"/>
    </location>
    <ligand>
        <name>Zn(2+)</name>
        <dbReference type="ChEBI" id="CHEBI:29105"/>
        <label>1</label>
    </ligand>
</feature>
<feature type="binding site" evidence="2">
    <location>
        <position position="98"/>
    </location>
    <ligand>
        <name>Zn(2+)</name>
        <dbReference type="ChEBI" id="CHEBI:29105"/>
        <label>2</label>
    </ligand>
</feature>
<feature type="binding site" evidence="2">
    <location>
        <position position="104"/>
    </location>
    <ligand>
        <name>Zn(2+)</name>
        <dbReference type="ChEBI" id="CHEBI:29105"/>
        <label>2</label>
    </ligand>
</feature>
<feature type="binding site" evidence="2">
    <location>
        <position position="122"/>
    </location>
    <ligand>
        <name>Zn(2+)</name>
        <dbReference type="ChEBI" id="CHEBI:29105"/>
        <label>3</label>
    </ligand>
</feature>
<feature type="binding site" evidence="2">
    <location>
        <position position="125"/>
    </location>
    <ligand>
        <name>Zn(2+)</name>
        <dbReference type="ChEBI" id="CHEBI:29105"/>
        <label>3</label>
    </ligand>
</feature>
<feature type="binding site" evidence="2">
    <location>
        <position position="148"/>
    </location>
    <ligand>
        <name>Zn(2+)</name>
        <dbReference type="ChEBI" id="CHEBI:29105"/>
        <label>3</label>
    </ligand>
</feature>
<feature type="binding site" evidence="2">
    <location>
        <position position="152"/>
    </location>
    <ligand>
        <name>Zn(2+)</name>
        <dbReference type="ChEBI" id="CHEBI:29105"/>
        <label>3</label>
    </ligand>
</feature>
<feature type="binding site" evidence="1">
    <location>
        <position position="413"/>
    </location>
    <ligand>
        <name>ATP</name>
        <dbReference type="ChEBI" id="CHEBI:30616"/>
    </ligand>
</feature>
<feature type="binding site" evidence="1">
    <location>
        <begin position="433"/>
        <end position="437"/>
    </location>
    <ligand>
        <name>ATP</name>
        <dbReference type="ChEBI" id="CHEBI:30616"/>
    </ligand>
</feature>
<feature type="binding site" evidence="1">
    <location>
        <position position="601"/>
    </location>
    <ligand>
        <name>ATP</name>
        <dbReference type="ChEBI" id="CHEBI:30616"/>
    </ligand>
</feature>
<feature type="binding site" evidence="1">
    <location>
        <position position="638"/>
    </location>
    <ligand>
        <name>ATP</name>
        <dbReference type="ChEBI" id="CHEBI:30616"/>
    </ligand>
</feature>
<feature type="binding site" evidence="1">
    <location>
        <position position="769"/>
    </location>
    <ligand>
        <name>ATP</name>
        <dbReference type="ChEBI" id="CHEBI:30616"/>
    </ligand>
</feature>
<feature type="modified residue" description="Phosphoserine" evidence="12">
    <location>
        <position position="56"/>
    </location>
</feature>
<feature type="modified residue" description="Phosphoserine" evidence="10 11">
    <location>
        <position position="869"/>
    </location>
</feature>
<feature type="mutagenesis site" description="Decreases binding to substrate." evidence="5">
    <original>A</original>
    <variation>H</variation>
    <location>
        <position position="484"/>
    </location>
</feature>
<feature type="mutagenesis site" description="Decreases binding to substrate." evidence="5">
    <original>K</original>
    <variation>P</variation>
    <location>
        <position position="485"/>
    </location>
</feature>
<feature type="mutagenesis site" description="Decreases binding to substrate." evidence="5">
    <original>R</original>
    <variation>S</variation>
    <location>
        <position position="487"/>
    </location>
</feature>
<feature type="turn" evidence="13">
    <location>
        <begin position="63"/>
        <end position="65"/>
    </location>
</feature>
<feature type="turn" evidence="13">
    <location>
        <begin position="70"/>
        <end position="72"/>
    </location>
</feature>
<feature type="strand" evidence="13">
    <location>
        <begin position="73"/>
        <end position="76"/>
    </location>
</feature>
<feature type="turn" evidence="13">
    <location>
        <begin position="77"/>
        <end position="79"/>
    </location>
</feature>
<feature type="strand" evidence="13">
    <location>
        <begin position="82"/>
        <end position="84"/>
    </location>
</feature>
<feature type="strand" evidence="13">
    <location>
        <begin position="88"/>
        <end position="92"/>
    </location>
</feature>
<feature type="helix" evidence="13">
    <location>
        <begin position="94"/>
        <end position="102"/>
    </location>
</feature>
<feature type="strand" evidence="13">
    <location>
        <begin position="107"/>
        <end position="109"/>
    </location>
</feature>
<feature type="strand" evidence="13">
    <location>
        <begin position="113"/>
        <end position="115"/>
    </location>
</feature>
<feature type="strand" evidence="13">
    <location>
        <begin position="123"/>
        <end position="125"/>
    </location>
</feature>
<feature type="turn" evidence="13">
    <location>
        <begin position="130"/>
        <end position="132"/>
    </location>
</feature>
<feature type="strand" evidence="13">
    <location>
        <begin position="133"/>
        <end position="136"/>
    </location>
</feature>
<feature type="strand" evidence="13">
    <location>
        <begin position="145"/>
        <end position="148"/>
    </location>
</feature>
<feature type="turn" evidence="13">
    <location>
        <begin position="149"/>
        <end position="154"/>
    </location>
</feature>
<feature type="helix" evidence="13">
    <location>
        <begin position="162"/>
        <end position="164"/>
    </location>
</feature>
<feature type="strand" evidence="13">
    <location>
        <begin position="166"/>
        <end position="169"/>
    </location>
</feature>
<feature type="strand" evidence="13">
    <location>
        <begin position="171"/>
        <end position="174"/>
    </location>
</feature>
<feature type="turn" evidence="13">
    <location>
        <begin position="176"/>
        <end position="178"/>
    </location>
</feature>
<feature type="helix" evidence="13">
    <location>
        <begin position="186"/>
        <end position="189"/>
    </location>
</feature>
<feature type="helix" evidence="13">
    <location>
        <begin position="195"/>
        <end position="205"/>
    </location>
</feature>
<feature type="helix" evidence="13">
    <location>
        <begin position="235"/>
        <end position="257"/>
    </location>
</feature>
<feature type="strand" evidence="13">
    <location>
        <begin position="267"/>
        <end position="271"/>
    </location>
</feature>
<feature type="strand" evidence="13">
    <location>
        <begin position="277"/>
        <end position="281"/>
    </location>
</feature>
<feature type="helix" evidence="14">
    <location>
        <begin position="288"/>
        <end position="290"/>
    </location>
</feature>
<feature type="strand" evidence="13">
    <location>
        <begin position="298"/>
        <end position="303"/>
    </location>
</feature>
<feature type="strand" evidence="13">
    <location>
        <begin position="305"/>
        <end position="309"/>
    </location>
</feature>
<feature type="strand" evidence="13">
    <location>
        <begin position="311"/>
        <end position="319"/>
    </location>
</feature>
<feature type="strand" evidence="13">
    <location>
        <begin position="328"/>
        <end position="332"/>
    </location>
</feature>
<feature type="strand" evidence="13">
    <location>
        <begin position="345"/>
        <end position="351"/>
    </location>
</feature>
<feature type="helix" evidence="13">
    <location>
        <begin position="356"/>
        <end position="370"/>
    </location>
</feature>
<feature type="helix" evidence="13">
    <location>
        <begin position="377"/>
        <end position="384"/>
    </location>
</feature>
<feature type="strand" evidence="14">
    <location>
        <begin position="390"/>
        <end position="393"/>
    </location>
</feature>
<feature type="helix" evidence="13">
    <location>
        <begin position="411"/>
        <end position="420"/>
    </location>
</feature>
<feature type="strand" evidence="13">
    <location>
        <begin position="424"/>
        <end position="429"/>
    </location>
</feature>
<feature type="helix" evidence="13">
    <location>
        <begin position="436"/>
        <end position="451"/>
    </location>
</feature>
<feature type="strand" evidence="13">
    <location>
        <begin position="455"/>
        <end position="461"/>
    </location>
</feature>
<feature type="helix" evidence="13">
    <location>
        <begin position="462"/>
        <end position="474"/>
    </location>
</feature>
<feature type="strand" evidence="13">
    <location>
        <begin position="479"/>
        <end position="481"/>
    </location>
</feature>
<feature type="helix" evidence="13">
    <location>
        <begin position="485"/>
        <end position="487"/>
    </location>
</feature>
<feature type="helix" evidence="13">
    <location>
        <begin position="495"/>
        <end position="497"/>
    </location>
</feature>
<feature type="helix" evidence="13">
    <location>
        <begin position="499"/>
        <end position="504"/>
    </location>
</feature>
<feature type="helix" evidence="13">
    <location>
        <begin position="510"/>
        <end position="521"/>
    </location>
</feature>
<feature type="helix" evidence="13">
    <location>
        <begin position="526"/>
        <end position="545"/>
    </location>
</feature>
<feature type="strand" evidence="13">
    <location>
        <begin position="548"/>
        <end position="553"/>
    </location>
</feature>
<feature type="helix" evidence="13">
    <location>
        <begin position="556"/>
        <end position="558"/>
    </location>
</feature>
<feature type="helix" evidence="14">
    <location>
        <begin position="560"/>
        <end position="562"/>
    </location>
</feature>
<feature type="strand" evidence="13">
    <location>
        <begin position="567"/>
        <end position="571"/>
    </location>
</feature>
<feature type="helix" evidence="13">
    <location>
        <begin position="574"/>
        <end position="576"/>
    </location>
</feature>
<feature type="helix" evidence="13">
    <location>
        <begin position="579"/>
        <end position="586"/>
    </location>
</feature>
<feature type="turn" evidence="13">
    <location>
        <begin position="587"/>
        <end position="589"/>
    </location>
</feature>
<feature type="strand" evidence="13">
    <location>
        <begin position="590"/>
        <end position="597"/>
    </location>
</feature>
<feature type="helix" evidence="13">
    <location>
        <begin position="609"/>
        <end position="613"/>
    </location>
</feature>
<feature type="turn" evidence="13">
    <location>
        <begin position="614"/>
        <end position="617"/>
    </location>
</feature>
<feature type="helix" evidence="13">
    <location>
        <begin position="620"/>
        <end position="626"/>
    </location>
</feature>
<feature type="helix" evidence="13">
    <location>
        <begin position="642"/>
        <end position="652"/>
    </location>
</feature>
<feature type="strand" evidence="13">
    <location>
        <begin position="658"/>
        <end position="661"/>
    </location>
</feature>
<feature type="turn" evidence="13">
    <location>
        <begin position="663"/>
        <end position="666"/>
    </location>
</feature>
<feature type="strand" evidence="13">
    <location>
        <begin position="682"/>
        <end position="686"/>
    </location>
</feature>
<feature type="strand" evidence="13">
    <location>
        <begin position="697"/>
        <end position="701"/>
    </location>
</feature>
<feature type="helix" evidence="13">
    <location>
        <begin position="703"/>
        <end position="718"/>
    </location>
</feature>
<feature type="helix" evidence="13">
    <location>
        <begin position="723"/>
        <end position="725"/>
    </location>
</feature>
<feature type="strand" evidence="13">
    <location>
        <begin position="726"/>
        <end position="731"/>
    </location>
</feature>
<feature type="helix" evidence="13">
    <location>
        <begin position="733"/>
        <end position="746"/>
    </location>
</feature>
<feature type="helix" evidence="13">
    <location>
        <begin position="751"/>
        <end position="755"/>
    </location>
</feature>
<feature type="strand" evidence="13">
    <location>
        <begin position="757"/>
        <end position="761"/>
    </location>
</feature>
<feature type="helix" evidence="13">
    <location>
        <begin position="762"/>
        <end position="765"/>
    </location>
</feature>
<feature type="strand" evidence="13">
    <location>
        <begin position="770"/>
        <end position="776"/>
    </location>
</feature>
<feature type="helix" evidence="13">
    <location>
        <begin position="787"/>
        <end position="790"/>
    </location>
</feature>
<feature type="helix" evidence="13">
    <location>
        <begin position="792"/>
        <end position="799"/>
    </location>
</feature>
<feature type="strand" evidence="13">
    <location>
        <begin position="800"/>
        <end position="810"/>
    </location>
</feature>
<feature type="helix" evidence="13">
    <location>
        <begin position="812"/>
        <end position="815"/>
    </location>
</feature>
<feature type="helix" evidence="13">
    <location>
        <begin position="819"/>
        <end position="831"/>
    </location>
</feature>
<feature type="strand" evidence="13">
    <location>
        <begin position="834"/>
        <end position="838"/>
    </location>
</feature>
<feature type="strand" evidence="13">
    <location>
        <begin position="841"/>
        <end position="844"/>
    </location>
</feature>